<name>FABZ_BACC3</name>
<organism>
    <name type="scientific">Bacillus cereus (strain 03BB102)</name>
    <dbReference type="NCBI Taxonomy" id="572264"/>
    <lineage>
        <taxon>Bacteria</taxon>
        <taxon>Bacillati</taxon>
        <taxon>Bacillota</taxon>
        <taxon>Bacilli</taxon>
        <taxon>Bacillales</taxon>
        <taxon>Bacillaceae</taxon>
        <taxon>Bacillus</taxon>
        <taxon>Bacillus cereus group</taxon>
    </lineage>
</organism>
<dbReference type="EC" id="4.2.1.59" evidence="1"/>
<dbReference type="EMBL" id="CP001407">
    <property type="protein sequence ID" value="ACO29889.1"/>
    <property type="molecule type" value="Genomic_DNA"/>
</dbReference>
<dbReference type="RefSeq" id="WP_000931959.1">
    <property type="nucleotide sequence ID" value="NZ_CP009318.1"/>
</dbReference>
<dbReference type="SMR" id="C1F0K1"/>
<dbReference type="GeneID" id="75088464"/>
<dbReference type="KEGG" id="bcx:BCA_5423"/>
<dbReference type="PATRIC" id="fig|572264.18.peg.5345"/>
<dbReference type="Proteomes" id="UP000002210">
    <property type="component" value="Chromosome"/>
</dbReference>
<dbReference type="GO" id="GO:0005737">
    <property type="term" value="C:cytoplasm"/>
    <property type="evidence" value="ECO:0007669"/>
    <property type="project" value="UniProtKB-SubCell"/>
</dbReference>
<dbReference type="GO" id="GO:0016020">
    <property type="term" value="C:membrane"/>
    <property type="evidence" value="ECO:0007669"/>
    <property type="project" value="GOC"/>
</dbReference>
<dbReference type="GO" id="GO:0019171">
    <property type="term" value="F:(3R)-hydroxyacyl-[acyl-carrier-protein] dehydratase activity"/>
    <property type="evidence" value="ECO:0007669"/>
    <property type="project" value="UniProtKB-EC"/>
</dbReference>
<dbReference type="GO" id="GO:0006633">
    <property type="term" value="P:fatty acid biosynthetic process"/>
    <property type="evidence" value="ECO:0007669"/>
    <property type="project" value="UniProtKB-UniRule"/>
</dbReference>
<dbReference type="GO" id="GO:0009245">
    <property type="term" value="P:lipid A biosynthetic process"/>
    <property type="evidence" value="ECO:0007669"/>
    <property type="project" value="UniProtKB-UniRule"/>
</dbReference>
<dbReference type="CDD" id="cd01288">
    <property type="entry name" value="FabZ"/>
    <property type="match status" value="1"/>
</dbReference>
<dbReference type="FunFam" id="3.10.129.10:FF:000001">
    <property type="entry name" value="3-hydroxyacyl-[acyl-carrier-protein] dehydratase FabZ"/>
    <property type="match status" value="1"/>
</dbReference>
<dbReference type="Gene3D" id="3.10.129.10">
    <property type="entry name" value="Hotdog Thioesterase"/>
    <property type="match status" value="1"/>
</dbReference>
<dbReference type="HAMAP" id="MF_00406">
    <property type="entry name" value="FabZ"/>
    <property type="match status" value="1"/>
</dbReference>
<dbReference type="InterPro" id="IPR013114">
    <property type="entry name" value="FabA_FabZ"/>
</dbReference>
<dbReference type="InterPro" id="IPR010084">
    <property type="entry name" value="FabZ"/>
</dbReference>
<dbReference type="InterPro" id="IPR029069">
    <property type="entry name" value="HotDog_dom_sf"/>
</dbReference>
<dbReference type="NCBIfam" id="TIGR01750">
    <property type="entry name" value="fabZ"/>
    <property type="match status" value="1"/>
</dbReference>
<dbReference type="NCBIfam" id="NF000582">
    <property type="entry name" value="PRK00006.1"/>
    <property type="match status" value="1"/>
</dbReference>
<dbReference type="PANTHER" id="PTHR30272">
    <property type="entry name" value="3-HYDROXYACYL-[ACYL-CARRIER-PROTEIN] DEHYDRATASE"/>
    <property type="match status" value="1"/>
</dbReference>
<dbReference type="PANTHER" id="PTHR30272:SF1">
    <property type="entry name" value="3-HYDROXYACYL-[ACYL-CARRIER-PROTEIN] DEHYDRATASE"/>
    <property type="match status" value="1"/>
</dbReference>
<dbReference type="Pfam" id="PF07977">
    <property type="entry name" value="FabA"/>
    <property type="match status" value="1"/>
</dbReference>
<dbReference type="SUPFAM" id="SSF54637">
    <property type="entry name" value="Thioesterase/thiol ester dehydrase-isomerase"/>
    <property type="match status" value="1"/>
</dbReference>
<keyword id="KW-0963">Cytoplasm</keyword>
<keyword id="KW-0441">Lipid A biosynthesis</keyword>
<keyword id="KW-0444">Lipid biosynthesis</keyword>
<keyword id="KW-0443">Lipid metabolism</keyword>
<keyword id="KW-0456">Lyase</keyword>
<feature type="chain" id="PRO_1000134687" description="3-hydroxyacyl-[acyl-carrier-protein] dehydratase FabZ">
    <location>
        <begin position="1"/>
        <end position="144"/>
    </location>
</feature>
<feature type="active site" evidence="1">
    <location>
        <position position="48"/>
    </location>
</feature>
<sequence>MLNIEQIKEIIPHRYPFLLVDKILEVDEGKRAVGIKNVSANEEFFNGHFPDYAVMPGVLIVEALAQVGAVAVLKKEENRGRLAFFAGIDNCRFKKQVRPGDQLRLEVEMTRVRGPIGKGKAIATVDGEVACEAEITFAIGDKKE</sequence>
<reference key="1">
    <citation type="submission" date="2009-02" db="EMBL/GenBank/DDBJ databases">
        <title>Genome sequence of Bacillus cereus 03BB102.</title>
        <authorList>
            <person name="Dodson R.J."/>
            <person name="Jackson P."/>
            <person name="Munk A.C."/>
            <person name="Brettin T."/>
            <person name="Bruce D."/>
            <person name="Detter C."/>
            <person name="Tapia R."/>
            <person name="Han C."/>
            <person name="Sutton G."/>
            <person name="Sims D."/>
        </authorList>
    </citation>
    <scope>NUCLEOTIDE SEQUENCE [LARGE SCALE GENOMIC DNA]</scope>
    <source>
        <strain>03BB102</strain>
    </source>
</reference>
<comment type="function">
    <text evidence="1">Involved in unsaturated fatty acids biosynthesis. Catalyzes the dehydration of short chain beta-hydroxyacyl-ACPs and long chain saturated and unsaturated beta-hydroxyacyl-ACPs.</text>
</comment>
<comment type="catalytic activity">
    <reaction evidence="1">
        <text>a (3R)-hydroxyacyl-[ACP] = a (2E)-enoyl-[ACP] + H2O</text>
        <dbReference type="Rhea" id="RHEA:13097"/>
        <dbReference type="Rhea" id="RHEA-COMP:9925"/>
        <dbReference type="Rhea" id="RHEA-COMP:9945"/>
        <dbReference type="ChEBI" id="CHEBI:15377"/>
        <dbReference type="ChEBI" id="CHEBI:78784"/>
        <dbReference type="ChEBI" id="CHEBI:78827"/>
        <dbReference type="EC" id="4.2.1.59"/>
    </reaction>
</comment>
<comment type="subcellular location">
    <subcellularLocation>
        <location evidence="1">Cytoplasm</location>
    </subcellularLocation>
</comment>
<comment type="similarity">
    <text evidence="1">Belongs to the thioester dehydratase family. FabZ subfamily.</text>
</comment>
<evidence type="ECO:0000255" key="1">
    <source>
        <dbReference type="HAMAP-Rule" id="MF_00406"/>
    </source>
</evidence>
<accession>C1F0K1</accession>
<proteinExistence type="inferred from homology"/>
<protein>
    <recommendedName>
        <fullName evidence="1">3-hydroxyacyl-[acyl-carrier-protein] dehydratase FabZ</fullName>
        <ecNumber evidence="1">4.2.1.59</ecNumber>
    </recommendedName>
    <alternativeName>
        <fullName evidence="1">(3R)-hydroxymyristoyl-[acyl-carrier-protein] dehydratase</fullName>
        <shortName evidence="1">(3R)-hydroxymyristoyl-ACP dehydrase</shortName>
    </alternativeName>
    <alternativeName>
        <fullName evidence="1">Beta-hydroxyacyl-ACP dehydratase</fullName>
    </alternativeName>
</protein>
<gene>
    <name evidence="1" type="primary">fabZ</name>
    <name type="ordered locus">BCA_5423</name>
</gene>